<proteinExistence type="inferred from homology"/>
<organism>
    <name type="scientific">Bacillus anthracis (strain A0248)</name>
    <dbReference type="NCBI Taxonomy" id="592021"/>
    <lineage>
        <taxon>Bacteria</taxon>
        <taxon>Bacillati</taxon>
        <taxon>Bacillota</taxon>
        <taxon>Bacilli</taxon>
        <taxon>Bacillales</taxon>
        <taxon>Bacillaceae</taxon>
        <taxon>Bacillus</taxon>
        <taxon>Bacillus cereus group</taxon>
    </lineage>
</organism>
<protein>
    <recommendedName>
        <fullName evidence="1">Ribosomal RNA small subunit methyltransferase H</fullName>
        <ecNumber evidence="1">2.1.1.199</ecNumber>
    </recommendedName>
    <alternativeName>
        <fullName evidence="1">16S rRNA m(4)C1402 methyltransferase</fullName>
    </alternativeName>
    <alternativeName>
        <fullName evidence="1">rRNA (cytosine-N(4)-)-methyltransferase RsmH</fullName>
    </alternativeName>
</protein>
<keyword id="KW-0963">Cytoplasm</keyword>
<keyword id="KW-0489">Methyltransferase</keyword>
<keyword id="KW-0698">rRNA processing</keyword>
<keyword id="KW-0949">S-adenosyl-L-methionine</keyword>
<keyword id="KW-0808">Transferase</keyword>
<sequence length="310" mass="34959">MFNHVTVLLKETVDGLDIKPDGTYVDCTLGGGGHSSYLLSQLTEGGRLIAFDQDEIAIQNAKEKFSSYGEQFITVKSNFRYLSEKLQELGITEVDGILFDLGVSSPQLDTPERGFSYHHDAPLDMRMDQDAPLTAYDVVNSWSYEQLVRIFFQYGEEKFSKQIARKIEAYRENKAIETTGELVELIKEGIPAPARRTGGHPAKRVFQAIRIAVNDELKVFEEALESAIEMVKPGGRVSVITFHSLEDRICKTTFKRNSTTPQLPPGLPIIPDEFKPKLKLITRKPILPSDIELEENNRARSAKLRIAEKR</sequence>
<feature type="chain" id="PRO_0000386726" description="Ribosomal RNA small subunit methyltransferase H">
    <location>
        <begin position="1"/>
        <end position="310"/>
    </location>
</feature>
<feature type="binding site" evidence="1">
    <location>
        <begin position="32"/>
        <end position="34"/>
    </location>
    <ligand>
        <name>S-adenosyl-L-methionine</name>
        <dbReference type="ChEBI" id="CHEBI:59789"/>
    </ligand>
</feature>
<feature type="binding site" evidence="1">
    <location>
        <position position="52"/>
    </location>
    <ligand>
        <name>S-adenosyl-L-methionine</name>
        <dbReference type="ChEBI" id="CHEBI:59789"/>
    </ligand>
</feature>
<feature type="binding site" evidence="1">
    <location>
        <position position="79"/>
    </location>
    <ligand>
        <name>S-adenosyl-L-methionine</name>
        <dbReference type="ChEBI" id="CHEBI:59789"/>
    </ligand>
</feature>
<feature type="binding site" evidence="1">
    <location>
        <position position="100"/>
    </location>
    <ligand>
        <name>S-adenosyl-L-methionine</name>
        <dbReference type="ChEBI" id="CHEBI:59789"/>
    </ligand>
</feature>
<feature type="binding site" evidence="1">
    <location>
        <position position="107"/>
    </location>
    <ligand>
        <name>S-adenosyl-L-methionine</name>
        <dbReference type="ChEBI" id="CHEBI:59789"/>
    </ligand>
</feature>
<name>RSMH_BACAA</name>
<accession>C3P688</accession>
<dbReference type="EC" id="2.1.1.199" evidence="1"/>
<dbReference type="EMBL" id="CP001598">
    <property type="protein sequence ID" value="ACQ49982.1"/>
    <property type="molecule type" value="Genomic_DNA"/>
</dbReference>
<dbReference type="RefSeq" id="WP_000481786.1">
    <property type="nucleotide sequence ID" value="NC_012659.1"/>
</dbReference>
<dbReference type="SMR" id="C3P688"/>
<dbReference type="GeneID" id="45023747"/>
<dbReference type="KEGG" id="bai:BAA_4083"/>
<dbReference type="HOGENOM" id="CLU_038422_2_0_9"/>
<dbReference type="GO" id="GO:0005737">
    <property type="term" value="C:cytoplasm"/>
    <property type="evidence" value="ECO:0007669"/>
    <property type="project" value="UniProtKB-SubCell"/>
</dbReference>
<dbReference type="GO" id="GO:0071424">
    <property type="term" value="F:rRNA (cytosine-N4-)-methyltransferase activity"/>
    <property type="evidence" value="ECO:0007669"/>
    <property type="project" value="UniProtKB-UniRule"/>
</dbReference>
<dbReference type="GO" id="GO:0070475">
    <property type="term" value="P:rRNA base methylation"/>
    <property type="evidence" value="ECO:0007669"/>
    <property type="project" value="UniProtKB-UniRule"/>
</dbReference>
<dbReference type="FunFam" id="1.10.150.170:FF:000001">
    <property type="entry name" value="Ribosomal RNA small subunit methyltransferase H"/>
    <property type="match status" value="1"/>
</dbReference>
<dbReference type="Gene3D" id="1.10.150.170">
    <property type="entry name" value="Putative methyltransferase TM0872, insert domain"/>
    <property type="match status" value="1"/>
</dbReference>
<dbReference type="Gene3D" id="3.40.50.150">
    <property type="entry name" value="Vaccinia Virus protein VP39"/>
    <property type="match status" value="1"/>
</dbReference>
<dbReference type="HAMAP" id="MF_01007">
    <property type="entry name" value="16SrRNA_methyltr_H"/>
    <property type="match status" value="1"/>
</dbReference>
<dbReference type="InterPro" id="IPR002903">
    <property type="entry name" value="RsmH"/>
</dbReference>
<dbReference type="InterPro" id="IPR023397">
    <property type="entry name" value="SAM-dep_MeTrfase_MraW_recog"/>
</dbReference>
<dbReference type="InterPro" id="IPR029063">
    <property type="entry name" value="SAM-dependent_MTases_sf"/>
</dbReference>
<dbReference type="NCBIfam" id="TIGR00006">
    <property type="entry name" value="16S rRNA (cytosine(1402)-N(4))-methyltransferase RsmH"/>
    <property type="match status" value="1"/>
</dbReference>
<dbReference type="PANTHER" id="PTHR11265:SF0">
    <property type="entry name" value="12S RRNA N4-METHYLCYTIDINE METHYLTRANSFERASE"/>
    <property type="match status" value="1"/>
</dbReference>
<dbReference type="PANTHER" id="PTHR11265">
    <property type="entry name" value="S-ADENOSYL-METHYLTRANSFERASE MRAW"/>
    <property type="match status" value="1"/>
</dbReference>
<dbReference type="Pfam" id="PF01795">
    <property type="entry name" value="Methyltransf_5"/>
    <property type="match status" value="1"/>
</dbReference>
<dbReference type="PIRSF" id="PIRSF004486">
    <property type="entry name" value="MraW"/>
    <property type="match status" value="1"/>
</dbReference>
<dbReference type="SUPFAM" id="SSF81799">
    <property type="entry name" value="Putative methyltransferase TM0872, insert domain"/>
    <property type="match status" value="1"/>
</dbReference>
<dbReference type="SUPFAM" id="SSF53335">
    <property type="entry name" value="S-adenosyl-L-methionine-dependent methyltransferases"/>
    <property type="match status" value="1"/>
</dbReference>
<gene>
    <name evidence="1" type="primary">rsmH</name>
    <name type="synonym">mraW</name>
    <name type="ordered locus">BAA_4083</name>
</gene>
<comment type="function">
    <text evidence="1">Specifically methylates the N4 position of cytidine in position 1402 (C1402) of 16S rRNA.</text>
</comment>
<comment type="catalytic activity">
    <reaction evidence="1">
        <text>cytidine(1402) in 16S rRNA + S-adenosyl-L-methionine = N(4)-methylcytidine(1402) in 16S rRNA + S-adenosyl-L-homocysteine + H(+)</text>
        <dbReference type="Rhea" id="RHEA:42928"/>
        <dbReference type="Rhea" id="RHEA-COMP:10286"/>
        <dbReference type="Rhea" id="RHEA-COMP:10287"/>
        <dbReference type="ChEBI" id="CHEBI:15378"/>
        <dbReference type="ChEBI" id="CHEBI:57856"/>
        <dbReference type="ChEBI" id="CHEBI:59789"/>
        <dbReference type="ChEBI" id="CHEBI:74506"/>
        <dbReference type="ChEBI" id="CHEBI:82748"/>
        <dbReference type="EC" id="2.1.1.199"/>
    </reaction>
</comment>
<comment type="subcellular location">
    <subcellularLocation>
        <location evidence="1">Cytoplasm</location>
    </subcellularLocation>
</comment>
<comment type="similarity">
    <text evidence="1">Belongs to the methyltransferase superfamily. RsmH family.</text>
</comment>
<evidence type="ECO:0000255" key="1">
    <source>
        <dbReference type="HAMAP-Rule" id="MF_01007"/>
    </source>
</evidence>
<reference key="1">
    <citation type="submission" date="2009-04" db="EMBL/GenBank/DDBJ databases">
        <title>Genome sequence of Bacillus anthracis A0248.</title>
        <authorList>
            <person name="Dodson R.J."/>
            <person name="Munk A.C."/>
            <person name="Bruce D."/>
            <person name="Detter C."/>
            <person name="Tapia R."/>
            <person name="Sutton G."/>
            <person name="Sims D."/>
            <person name="Brettin T."/>
        </authorList>
    </citation>
    <scope>NUCLEOTIDE SEQUENCE [LARGE SCALE GENOMIC DNA]</scope>
    <source>
        <strain>A0248</strain>
    </source>
</reference>